<keyword id="KW-0028">Amino-acid biosynthesis</keyword>
<keyword id="KW-0057">Aromatic amino acid biosynthesis</keyword>
<keyword id="KW-0067">ATP-binding</keyword>
<keyword id="KW-0963">Cytoplasm</keyword>
<keyword id="KW-0418">Kinase</keyword>
<keyword id="KW-0547">Nucleotide-binding</keyword>
<keyword id="KW-1185">Reference proteome</keyword>
<keyword id="KW-0808">Transferase</keyword>
<dbReference type="EC" id="2.7.1.71" evidence="1"/>
<dbReference type="EMBL" id="CP000112">
    <property type="protein sequence ID" value="ABB39524.2"/>
    <property type="molecule type" value="Genomic_DNA"/>
</dbReference>
<dbReference type="RefSeq" id="WP_011368549.1">
    <property type="nucleotide sequence ID" value="NC_007519.1"/>
</dbReference>
<dbReference type="SMR" id="Q30XS2"/>
<dbReference type="STRING" id="207559.Dde_2728"/>
<dbReference type="KEGG" id="dde:Dde_2728"/>
<dbReference type="eggNOG" id="COG0703">
    <property type="taxonomic scope" value="Bacteria"/>
</dbReference>
<dbReference type="HOGENOM" id="CLU_057607_4_3_7"/>
<dbReference type="UniPathway" id="UPA00053">
    <property type="reaction ID" value="UER00088"/>
</dbReference>
<dbReference type="Proteomes" id="UP000002710">
    <property type="component" value="Chromosome"/>
</dbReference>
<dbReference type="GO" id="GO:0005829">
    <property type="term" value="C:cytosol"/>
    <property type="evidence" value="ECO:0007669"/>
    <property type="project" value="TreeGrafter"/>
</dbReference>
<dbReference type="GO" id="GO:0005524">
    <property type="term" value="F:ATP binding"/>
    <property type="evidence" value="ECO:0007669"/>
    <property type="project" value="UniProtKB-UniRule"/>
</dbReference>
<dbReference type="GO" id="GO:0000287">
    <property type="term" value="F:magnesium ion binding"/>
    <property type="evidence" value="ECO:0007669"/>
    <property type="project" value="UniProtKB-UniRule"/>
</dbReference>
<dbReference type="GO" id="GO:0004765">
    <property type="term" value="F:shikimate kinase activity"/>
    <property type="evidence" value="ECO:0007669"/>
    <property type="project" value="UniProtKB-UniRule"/>
</dbReference>
<dbReference type="GO" id="GO:0008652">
    <property type="term" value="P:amino acid biosynthetic process"/>
    <property type="evidence" value="ECO:0007669"/>
    <property type="project" value="UniProtKB-KW"/>
</dbReference>
<dbReference type="GO" id="GO:0009073">
    <property type="term" value="P:aromatic amino acid family biosynthetic process"/>
    <property type="evidence" value="ECO:0007669"/>
    <property type="project" value="UniProtKB-KW"/>
</dbReference>
<dbReference type="GO" id="GO:0009423">
    <property type="term" value="P:chorismate biosynthetic process"/>
    <property type="evidence" value="ECO:0007669"/>
    <property type="project" value="UniProtKB-UniRule"/>
</dbReference>
<dbReference type="CDD" id="cd00464">
    <property type="entry name" value="SK"/>
    <property type="match status" value="1"/>
</dbReference>
<dbReference type="Gene3D" id="3.40.50.300">
    <property type="entry name" value="P-loop containing nucleotide triphosphate hydrolases"/>
    <property type="match status" value="1"/>
</dbReference>
<dbReference type="HAMAP" id="MF_00109">
    <property type="entry name" value="Shikimate_kinase"/>
    <property type="match status" value="1"/>
</dbReference>
<dbReference type="InterPro" id="IPR027417">
    <property type="entry name" value="P-loop_NTPase"/>
</dbReference>
<dbReference type="InterPro" id="IPR031322">
    <property type="entry name" value="Shikimate/glucono_kinase"/>
</dbReference>
<dbReference type="InterPro" id="IPR000623">
    <property type="entry name" value="Shikimate_kinase/TSH1"/>
</dbReference>
<dbReference type="InterPro" id="IPR023000">
    <property type="entry name" value="Shikimate_kinase_CS"/>
</dbReference>
<dbReference type="NCBIfam" id="NF002988">
    <property type="entry name" value="PRK03731.1"/>
    <property type="match status" value="1"/>
</dbReference>
<dbReference type="PANTHER" id="PTHR21087">
    <property type="entry name" value="SHIKIMATE KINASE"/>
    <property type="match status" value="1"/>
</dbReference>
<dbReference type="PANTHER" id="PTHR21087:SF21">
    <property type="entry name" value="SHIKIMATE KINASE 2"/>
    <property type="match status" value="1"/>
</dbReference>
<dbReference type="Pfam" id="PF01202">
    <property type="entry name" value="SKI"/>
    <property type="match status" value="1"/>
</dbReference>
<dbReference type="PRINTS" id="PR01100">
    <property type="entry name" value="SHIKIMTKNASE"/>
</dbReference>
<dbReference type="SUPFAM" id="SSF52540">
    <property type="entry name" value="P-loop containing nucleoside triphosphate hydrolases"/>
    <property type="match status" value="1"/>
</dbReference>
<dbReference type="PROSITE" id="PS01128">
    <property type="entry name" value="SHIKIMATE_KINASE"/>
    <property type="match status" value="1"/>
</dbReference>
<protein>
    <recommendedName>
        <fullName evidence="1">Shikimate kinase</fullName>
        <shortName evidence="1">SK</shortName>
        <ecNumber evidence="1">2.7.1.71</ecNumber>
    </recommendedName>
</protein>
<gene>
    <name evidence="1" type="primary">aroK</name>
    <name type="ordered locus">Dde_2728</name>
</gene>
<sequence length="172" mass="17971">MERIFLIGARASGKTTAGRILAEKLGWRCADTDEMVQRRAGCSIADMVARDGWPVFREAEAGALQAACALTRVVVSTGGGMVLRADNRAALREGGIVFYLCAPAAVLASRLVLDPVVSQRPSLTGGNPAAEIAAVLAERDTLYRETAHHVVDACQPAAAVAGQMLRLLAAAG</sequence>
<reference key="1">
    <citation type="journal article" date="2011" name="J. Bacteriol.">
        <title>Complete genome sequence and updated annotation of Desulfovibrio alaskensis G20.</title>
        <authorList>
            <person name="Hauser L.J."/>
            <person name="Land M.L."/>
            <person name="Brown S.D."/>
            <person name="Larimer F."/>
            <person name="Keller K.L."/>
            <person name="Rapp-Giles B.J."/>
            <person name="Price M.N."/>
            <person name="Lin M."/>
            <person name="Bruce D.C."/>
            <person name="Detter J.C."/>
            <person name="Tapia R."/>
            <person name="Han C.S."/>
            <person name="Goodwin L.A."/>
            <person name="Cheng J.F."/>
            <person name="Pitluck S."/>
            <person name="Copeland A."/>
            <person name="Lucas S."/>
            <person name="Nolan M."/>
            <person name="Lapidus A.L."/>
            <person name="Palumbo A.V."/>
            <person name="Wall J.D."/>
        </authorList>
    </citation>
    <scope>NUCLEOTIDE SEQUENCE [LARGE SCALE GENOMIC DNA]</scope>
    <source>
        <strain>ATCC BAA-1058 / DSM 17464 / G20</strain>
    </source>
</reference>
<evidence type="ECO:0000255" key="1">
    <source>
        <dbReference type="HAMAP-Rule" id="MF_00109"/>
    </source>
</evidence>
<proteinExistence type="inferred from homology"/>
<organism>
    <name type="scientific">Oleidesulfovibrio alaskensis (strain ATCC BAA-1058 / DSM 17464 / G20)</name>
    <name type="common">Desulfovibrio alaskensis</name>
    <dbReference type="NCBI Taxonomy" id="207559"/>
    <lineage>
        <taxon>Bacteria</taxon>
        <taxon>Pseudomonadati</taxon>
        <taxon>Thermodesulfobacteriota</taxon>
        <taxon>Desulfovibrionia</taxon>
        <taxon>Desulfovibrionales</taxon>
        <taxon>Desulfovibrionaceae</taxon>
        <taxon>Oleidesulfovibrio</taxon>
    </lineage>
</organism>
<comment type="catalytic activity">
    <reaction evidence="1">
        <text>shikimate + ATP = 3-phosphoshikimate + ADP + H(+)</text>
        <dbReference type="Rhea" id="RHEA:13121"/>
        <dbReference type="ChEBI" id="CHEBI:15378"/>
        <dbReference type="ChEBI" id="CHEBI:30616"/>
        <dbReference type="ChEBI" id="CHEBI:36208"/>
        <dbReference type="ChEBI" id="CHEBI:145989"/>
        <dbReference type="ChEBI" id="CHEBI:456216"/>
        <dbReference type="EC" id="2.7.1.71"/>
    </reaction>
</comment>
<comment type="pathway">
    <text evidence="1">Metabolic intermediate biosynthesis; chorismate biosynthesis; chorismate from D-erythrose 4-phosphate and phosphoenolpyruvate: step 5/7.</text>
</comment>
<comment type="subcellular location">
    <subcellularLocation>
        <location evidence="1">Cytoplasm</location>
    </subcellularLocation>
</comment>
<comment type="similarity">
    <text evidence="1">Belongs to the shikimate kinase family.</text>
</comment>
<name>AROK_OLEA2</name>
<accession>Q30XS2</accession>
<feature type="chain" id="PRO_0000237874" description="Shikimate kinase">
    <location>
        <begin position="1"/>
        <end position="172"/>
    </location>
</feature>
<feature type="binding site" evidence="1">
    <location>
        <begin position="8"/>
        <end position="15"/>
    </location>
    <ligand>
        <name>ATP</name>
        <dbReference type="ChEBI" id="CHEBI:30616"/>
    </ligand>
</feature>